<protein>
    <recommendedName>
        <fullName evidence="10">SLIT-ROBO Rho GTPase-activating protein 2</fullName>
        <shortName evidence="10">srGAP2</shortName>
    </recommendedName>
</protein>
<evidence type="ECO:0000250" key="1">
    <source>
        <dbReference type="UniProtKB" id="O75044"/>
    </source>
</evidence>
<evidence type="ECO:0000250" key="2">
    <source>
        <dbReference type="UniProtKB" id="Q91Z67"/>
    </source>
</evidence>
<evidence type="ECO:0000255" key="3"/>
<evidence type="ECO:0000255" key="4">
    <source>
        <dbReference type="PROSITE-ProRule" id="PRU00172"/>
    </source>
</evidence>
<evidence type="ECO:0000255" key="5">
    <source>
        <dbReference type="PROSITE-ProRule" id="PRU00192"/>
    </source>
</evidence>
<evidence type="ECO:0000255" key="6">
    <source>
        <dbReference type="PROSITE-ProRule" id="PRU01077"/>
    </source>
</evidence>
<evidence type="ECO:0000256" key="7">
    <source>
        <dbReference type="SAM" id="MobiDB-lite"/>
    </source>
</evidence>
<evidence type="ECO:0000269" key="8">
    <source>
    </source>
</evidence>
<evidence type="ECO:0000269" key="9">
    <source>
    </source>
</evidence>
<evidence type="ECO:0000303" key="10">
    <source>
    </source>
</evidence>
<evidence type="ECO:0000312" key="11">
    <source>
        <dbReference type="RGD" id="1566016"/>
    </source>
</evidence>
<evidence type="ECO:0007744" key="12">
    <source>
    </source>
</evidence>
<accession>D4A208</accession>
<dbReference type="EMBL" id="AABR06074665">
    <property type="status" value="NOT_ANNOTATED_CDS"/>
    <property type="molecule type" value="Genomic_DNA"/>
</dbReference>
<dbReference type="RefSeq" id="NP_001388305.1">
    <property type="nucleotide sequence ID" value="NM_001401376.1"/>
</dbReference>
<dbReference type="RefSeq" id="XP_006249844.1">
    <property type="nucleotide sequence ID" value="XM_006249782.3"/>
</dbReference>
<dbReference type="RefSeq" id="XP_006249845.1">
    <property type="nucleotide sequence ID" value="XM_006249783.5"/>
</dbReference>
<dbReference type="SMR" id="D4A208"/>
<dbReference type="BioGRID" id="262246">
    <property type="interactions" value="1"/>
</dbReference>
<dbReference type="FunCoup" id="D4A208">
    <property type="interactions" value="2505"/>
</dbReference>
<dbReference type="IntAct" id="D4A208">
    <property type="interactions" value="1"/>
</dbReference>
<dbReference type="MINT" id="D4A208"/>
<dbReference type="STRING" id="10116.ENSRNOP00000068925"/>
<dbReference type="GlyGen" id="D4A208">
    <property type="glycosylation" value="1 site"/>
</dbReference>
<dbReference type="iPTMnet" id="D4A208"/>
<dbReference type="PhosphoSitePlus" id="D4A208"/>
<dbReference type="jPOST" id="D4A208"/>
<dbReference type="PaxDb" id="10116-ENSRNOP00000008976"/>
<dbReference type="PeptideAtlas" id="D4A208"/>
<dbReference type="Ensembl" id="ENSRNOT00000085967.2">
    <property type="protein sequence ID" value="ENSRNOP00000068925.1"/>
    <property type="gene ID" value="ENSRNOG00000006733.8"/>
</dbReference>
<dbReference type="GeneID" id="360840"/>
<dbReference type="UCSC" id="RGD:1566016">
    <property type="organism name" value="rat"/>
</dbReference>
<dbReference type="AGR" id="RGD:1566016"/>
<dbReference type="CTD" id="23380"/>
<dbReference type="RGD" id="1566016">
    <property type="gene designation" value="Srgap2"/>
</dbReference>
<dbReference type="eggNOG" id="KOG3565">
    <property type="taxonomic scope" value="Eukaryota"/>
</dbReference>
<dbReference type="GeneTree" id="ENSGT00950000182824"/>
<dbReference type="InParanoid" id="D4A208"/>
<dbReference type="OMA" id="SPLNCWN"/>
<dbReference type="OrthoDB" id="5981864at2759"/>
<dbReference type="PhylomeDB" id="D4A208"/>
<dbReference type="TreeFam" id="TF315892"/>
<dbReference type="Reactome" id="R-RNO-5663220">
    <property type="pathway name" value="RHO GTPases Activate Formins"/>
</dbReference>
<dbReference type="Reactome" id="R-RNO-9013148">
    <property type="pathway name" value="CDC42 GTPase cycle"/>
</dbReference>
<dbReference type="Reactome" id="R-RNO-9013149">
    <property type="pathway name" value="RAC1 GTPase cycle"/>
</dbReference>
<dbReference type="Reactome" id="R-RNO-9013406">
    <property type="pathway name" value="RHOQ GTPase cycle"/>
</dbReference>
<dbReference type="Reactome" id="R-RNO-9013420">
    <property type="pathway name" value="RHOU GTPase cycle"/>
</dbReference>
<dbReference type="Reactome" id="R-RNO-9035034">
    <property type="pathway name" value="RHOF GTPase cycle"/>
</dbReference>
<dbReference type="PRO" id="PR:D4A208"/>
<dbReference type="Proteomes" id="UP000002494">
    <property type="component" value="Chromosome 13"/>
</dbReference>
<dbReference type="Bgee" id="ENSRNOG00000006733">
    <property type="expression patterns" value="Expressed in lung and 18 other cell types or tissues"/>
</dbReference>
<dbReference type="ExpressionAtlas" id="D4A208">
    <property type="expression patterns" value="baseline and differential"/>
</dbReference>
<dbReference type="GO" id="GO:0005737">
    <property type="term" value="C:cytoplasm"/>
    <property type="evidence" value="ECO:0000314"/>
    <property type="project" value="UniProtKB"/>
</dbReference>
<dbReference type="GO" id="GO:0005829">
    <property type="term" value="C:cytosol"/>
    <property type="evidence" value="ECO:0000250"/>
    <property type="project" value="UniProtKB"/>
</dbReference>
<dbReference type="GO" id="GO:0043197">
    <property type="term" value="C:dendritic spine"/>
    <property type="evidence" value="ECO:0000266"/>
    <property type="project" value="RGD"/>
</dbReference>
<dbReference type="GO" id="GO:0044327">
    <property type="term" value="C:dendritic spine head"/>
    <property type="evidence" value="ECO:0000250"/>
    <property type="project" value="UniProtKB"/>
</dbReference>
<dbReference type="GO" id="GO:0098978">
    <property type="term" value="C:glutamatergic synapse"/>
    <property type="evidence" value="ECO:0000266"/>
    <property type="project" value="RGD"/>
</dbReference>
<dbReference type="GO" id="GO:0030027">
    <property type="term" value="C:lamellipodium"/>
    <property type="evidence" value="ECO:0000266"/>
    <property type="project" value="RGD"/>
</dbReference>
<dbReference type="GO" id="GO:0005634">
    <property type="term" value="C:nucleus"/>
    <property type="evidence" value="ECO:0000314"/>
    <property type="project" value="UniProtKB"/>
</dbReference>
<dbReference type="GO" id="GO:0045335">
    <property type="term" value="C:phagocytic vesicle"/>
    <property type="evidence" value="ECO:0000250"/>
    <property type="project" value="UniProtKB"/>
</dbReference>
<dbReference type="GO" id="GO:0005886">
    <property type="term" value="C:plasma membrane"/>
    <property type="evidence" value="ECO:0000250"/>
    <property type="project" value="UniProtKB"/>
</dbReference>
<dbReference type="GO" id="GO:0014069">
    <property type="term" value="C:postsynaptic density"/>
    <property type="evidence" value="ECO:0000250"/>
    <property type="project" value="UniProtKB"/>
</dbReference>
<dbReference type="GO" id="GO:0045211">
    <property type="term" value="C:postsynaptic membrane"/>
    <property type="evidence" value="ECO:0000250"/>
    <property type="project" value="UniProtKB"/>
</dbReference>
<dbReference type="GO" id="GO:0005096">
    <property type="term" value="F:GTPase activator activity"/>
    <property type="evidence" value="ECO:0000250"/>
    <property type="project" value="UniProtKB"/>
</dbReference>
<dbReference type="GO" id="GO:0042802">
    <property type="term" value="F:identical protein binding"/>
    <property type="evidence" value="ECO:0000266"/>
    <property type="project" value="RGD"/>
</dbReference>
<dbReference type="GO" id="GO:0042803">
    <property type="term" value="F:protein homodimerization activity"/>
    <property type="evidence" value="ECO:0000250"/>
    <property type="project" value="UniProtKB"/>
</dbReference>
<dbReference type="GO" id="GO:0031267">
    <property type="term" value="F:small GTPase binding"/>
    <property type="evidence" value="ECO:0000250"/>
    <property type="project" value="UniProtKB"/>
</dbReference>
<dbReference type="GO" id="GO:0051014">
    <property type="term" value="P:actin filament severing"/>
    <property type="evidence" value="ECO:0000250"/>
    <property type="project" value="UniProtKB"/>
</dbReference>
<dbReference type="GO" id="GO:0060996">
    <property type="term" value="P:dendritic spine development"/>
    <property type="evidence" value="ECO:0000250"/>
    <property type="project" value="UniProtKB"/>
</dbReference>
<dbReference type="GO" id="GO:1904861">
    <property type="term" value="P:excitatory synapse assembly"/>
    <property type="evidence" value="ECO:0000266"/>
    <property type="project" value="RGD"/>
</dbReference>
<dbReference type="GO" id="GO:0021816">
    <property type="term" value="P:extension of a leading process involved in cell motility in cerebral cortex radial glia guided migration"/>
    <property type="evidence" value="ECO:0000250"/>
    <property type="project" value="UniProtKB"/>
</dbReference>
<dbReference type="GO" id="GO:0046847">
    <property type="term" value="P:filopodium assembly"/>
    <property type="evidence" value="ECO:0000250"/>
    <property type="project" value="UniProtKB"/>
</dbReference>
<dbReference type="GO" id="GO:1904862">
    <property type="term" value="P:inhibitory synapse assembly"/>
    <property type="evidence" value="ECO:0000266"/>
    <property type="project" value="RGD"/>
</dbReference>
<dbReference type="GO" id="GO:0003363">
    <property type="term" value="P:lamellipodium assembly involved in ameboidal cell migration"/>
    <property type="evidence" value="ECO:0000266"/>
    <property type="project" value="RGD"/>
</dbReference>
<dbReference type="GO" id="GO:0030336">
    <property type="term" value="P:negative regulation of cell migration"/>
    <property type="evidence" value="ECO:0000318"/>
    <property type="project" value="GO_Central"/>
</dbReference>
<dbReference type="GO" id="GO:2001223">
    <property type="term" value="P:negative regulation of neuron migration"/>
    <property type="evidence" value="ECO:0000250"/>
    <property type="project" value="UniProtKB"/>
</dbReference>
<dbReference type="GO" id="GO:0048812">
    <property type="term" value="P:neuron projection morphogenesis"/>
    <property type="evidence" value="ECO:0000250"/>
    <property type="project" value="UniProtKB"/>
</dbReference>
<dbReference type="GO" id="GO:0043547">
    <property type="term" value="P:positive regulation of GTPase activity"/>
    <property type="evidence" value="ECO:0000250"/>
    <property type="project" value="UniProtKB"/>
</dbReference>
<dbReference type="GO" id="GO:0030334">
    <property type="term" value="P:regulation of cell migration"/>
    <property type="evidence" value="ECO:0000250"/>
    <property type="project" value="UniProtKB"/>
</dbReference>
<dbReference type="GO" id="GO:0051963">
    <property type="term" value="P:regulation of synapse assembly"/>
    <property type="evidence" value="ECO:0000266"/>
    <property type="project" value="RGD"/>
</dbReference>
<dbReference type="GO" id="GO:0007165">
    <property type="term" value="P:signal transduction"/>
    <property type="evidence" value="ECO:0007669"/>
    <property type="project" value="InterPro"/>
</dbReference>
<dbReference type="GO" id="GO:0034446">
    <property type="term" value="P:substrate adhesion-dependent cell spreading"/>
    <property type="evidence" value="ECO:0000266"/>
    <property type="project" value="RGD"/>
</dbReference>
<dbReference type="CDD" id="cd07682">
    <property type="entry name" value="F-BAR_srGAP2"/>
    <property type="match status" value="1"/>
</dbReference>
<dbReference type="CDD" id="cd04383">
    <property type="entry name" value="RhoGAP_srGAP"/>
    <property type="match status" value="1"/>
</dbReference>
<dbReference type="CDD" id="cd11955">
    <property type="entry name" value="SH3_srGAP1-3"/>
    <property type="match status" value="1"/>
</dbReference>
<dbReference type="FunFam" id="1.10.555.10:FF:000010">
    <property type="entry name" value="SLIT-ROBO Rho GTPase-activating protein 1 isoform 2"/>
    <property type="match status" value="1"/>
</dbReference>
<dbReference type="FunFam" id="1.20.1270.60:FF:000006">
    <property type="entry name" value="SLIT-ROBO Rho GTPase-activating protein 1 isoform 2"/>
    <property type="match status" value="1"/>
</dbReference>
<dbReference type="FunFam" id="2.30.30.40:FF:000266">
    <property type="entry name" value="SLIT-ROBO Rho GTPase-activating protein 2"/>
    <property type="match status" value="1"/>
</dbReference>
<dbReference type="Gene3D" id="1.20.1270.60">
    <property type="entry name" value="Arfaptin homology (AH) domain/BAR domain"/>
    <property type="match status" value="1"/>
</dbReference>
<dbReference type="Gene3D" id="1.10.555.10">
    <property type="entry name" value="Rho GTPase activation protein"/>
    <property type="match status" value="1"/>
</dbReference>
<dbReference type="Gene3D" id="2.30.30.40">
    <property type="entry name" value="SH3 Domains"/>
    <property type="match status" value="1"/>
</dbReference>
<dbReference type="InterPro" id="IPR027267">
    <property type="entry name" value="AH/BAR_dom_sf"/>
</dbReference>
<dbReference type="InterPro" id="IPR031160">
    <property type="entry name" value="F_BAR"/>
</dbReference>
<dbReference type="InterPro" id="IPR001060">
    <property type="entry name" value="FCH_dom"/>
</dbReference>
<dbReference type="InterPro" id="IPR008936">
    <property type="entry name" value="Rho_GTPase_activation_prot"/>
</dbReference>
<dbReference type="InterPro" id="IPR000198">
    <property type="entry name" value="RhoGAP_dom"/>
</dbReference>
<dbReference type="InterPro" id="IPR036028">
    <property type="entry name" value="SH3-like_dom_sf"/>
</dbReference>
<dbReference type="InterPro" id="IPR001452">
    <property type="entry name" value="SH3_domain"/>
</dbReference>
<dbReference type="InterPro" id="IPR051627">
    <property type="entry name" value="SLIT-ROBO_RhoGAP"/>
</dbReference>
<dbReference type="InterPro" id="IPR035648">
    <property type="entry name" value="srGAP1/2/3_SH3"/>
</dbReference>
<dbReference type="PANTHER" id="PTHR14166">
    <property type="entry name" value="SLIT-ROBO RHO GTPASE ACTIVATING PROTEIN"/>
    <property type="match status" value="1"/>
</dbReference>
<dbReference type="Pfam" id="PF00611">
    <property type="entry name" value="FCH"/>
    <property type="match status" value="1"/>
</dbReference>
<dbReference type="Pfam" id="PF00620">
    <property type="entry name" value="RhoGAP"/>
    <property type="match status" value="1"/>
</dbReference>
<dbReference type="Pfam" id="PF00018">
    <property type="entry name" value="SH3_1"/>
    <property type="match status" value="1"/>
</dbReference>
<dbReference type="SMART" id="SM00055">
    <property type="entry name" value="FCH"/>
    <property type="match status" value="1"/>
</dbReference>
<dbReference type="SMART" id="SM00324">
    <property type="entry name" value="RhoGAP"/>
    <property type="match status" value="1"/>
</dbReference>
<dbReference type="SMART" id="SM00326">
    <property type="entry name" value="SH3"/>
    <property type="match status" value="1"/>
</dbReference>
<dbReference type="SUPFAM" id="SSF103657">
    <property type="entry name" value="BAR/IMD domain-like"/>
    <property type="match status" value="1"/>
</dbReference>
<dbReference type="SUPFAM" id="SSF48350">
    <property type="entry name" value="GTPase activation domain, GAP"/>
    <property type="match status" value="1"/>
</dbReference>
<dbReference type="SUPFAM" id="SSF50044">
    <property type="entry name" value="SH3-domain"/>
    <property type="match status" value="1"/>
</dbReference>
<dbReference type="PROSITE" id="PS51741">
    <property type="entry name" value="F_BAR"/>
    <property type="match status" value="1"/>
</dbReference>
<dbReference type="PROSITE" id="PS50238">
    <property type="entry name" value="RHOGAP"/>
    <property type="match status" value="1"/>
</dbReference>
<dbReference type="PROSITE" id="PS50002">
    <property type="entry name" value="SH3"/>
    <property type="match status" value="1"/>
</dbReference>
<keyword id="KW-1003">Cell membrane</keyword>
<keyword id="KW-0966">Cell projection</keyword>
<keyword id="KW-0175">Coiled coil</keyword>
<keyword id="KW-0963">Cytoplasm</keyword>
<keyword id="KW-0968">Cytoplasmic vesicle</keyword>
<keyword id="KW-0343">GTPase activation</keyword>
<keyword id="KW-0472">Membrane</keyword>
<keyword id="KW-0488">Methylation</keyword>
<keyword id="KW-0524">Neurogenesis</keyword>
<keyword id="KW-0539">Nucleus</keyword>
<keyword id="KW-0597">Phosphoprotein</keyword>
<keyword id="KW-0628">Postsynaptic cell membrane</keyword>
<keyword id="KW-1185">Reference proteome</keyword>
<keyword id="KW-0728">SH3 domain</keyword>
<keyword id="KW-0770">Synapse</keyword>
<sequence length="1071" mass="120878">MTSPAKFKKDKEIIAEYDTQVKEIRAQLTEQMKCLDQQCELRVQLLQDLQDFFRKKAEIEMDYSRNLEKLAERFLAKTRSTKDQQFKKDQNVLSPVNCWNLLLNQVKRESRDHTTLSDIYLNNIIPRFVQVSEDSGRLFKKSKEVGQQLQDDLMKVLNELYSVMKTYHMYNADSISAQSKLKEAEKQEEKQIGKSVKQEDRQTPRSPDSTANVRIEEKHVRRSSVKKIEKMKEKRQAKYTENKLKAIKARNEYLLALEATNASVFKYYIHDLSDIIDQCCDLGYHASLNRALRTFLSAELNLEQSKHEGLDAIENAVENLDATSDKQRLMEMYNNVFCPPMKFEFQPHMGDMASQLCAQQPVQSELVQRRQQLQSRLSTLKIENEEVKKTMEATLQTIQDIVTVEDFDVSDCFQYSNSMESVKSTVSETFMSKPSIAKRRANQQETEQFYFTKMKEYLEGRNLITKLQAKHDLLQKTLGESQRTDCSLARRSSTVRKQDSSQAIPLVVESCIRFISRHGLRHEGVFRVSGSQVEVNDIKNAFERGEDPLAGDQNDHDMDSIAGVLKLYFRGLEHPLFPKDIFHDLIACVTMDNLQERAVHIRKVLLVLPKPTLIIMRYLFAFLNHLSQFSEENMMDPYNLAICFGPSLMSVPEGHDQVSCQAHVNELIKTIIIQHENIFPNPRELEGPIYSRGGSMEDYCDSTHGETISAEDSTQDVTAEHHTSDDECEPIEAIAKFDYVGRTARELSFKKGASLLLYQRASDDWWEGRHNGIDGLIPHQYIVVQDTEDGVVERSSPKSEIEVMSEPPEEKVTARTGASCPSGGHVADIYLANINKQRKRPESGSIRKAFRSDSHGLGSSLTDSSSPGVGASCRPSSQPIMSQNLPKEGPDKCSISGHGSLNSISRHSSLKNRMDSPQIRKTATAGRSKSFNNHRPMDPEVIAQDIEATMNSALNELQELERQSSAKHTPDVVLDTLEPLKTSPVVAPTSEPSSPLHTQLLKDPEPAFQRSASTAGDIACAFRPVKSVKMAAPVKPPATRPKPTVFPKTNATSPGVNSSASPQSTDKSCTV</sequence>
<gene>
    <name evidence="10 11" type="primary">Srgap2</name>
</gene>
<organism>
    <name type="scientific">Rattus norvegicus</name>
    <name type="common">Rat</name>
    <dbReference type="NCBI Taxonomy" id="10116"/>
    <lineage>
        <taxon>Eukaryota</taxon>
        <taxon>Metazoa</taxon>
        <taxon>Chordata</taxon>
        <taxon>Craniata</taxon>
        <taxon>Vertebrata</taxon>
        <taxon>Euteleostomi</taxon>
        <taxon>Mammalia</taxon>
        <taxon>Eutheria</taxon>
        <taxon>Euarchontoglires</taxon>
        <taxon>Glires</taxon>
        <taxon>Rodentia</taxon>
        <taxon>Myomorpha</taxon>
        <taxon>Muroidea</taxon>
        <taxon>Muridae</taxon>
        <taxon>Murinae</taxon>
        <taxon>Rattus</taxon>
    </lineage>
</organism>
<feature type="chain" id="PRO_0000418882" description="SLIT-ROBO Rho GTPase-activating protein 2">
    <location>
        <begin position="1"/>
        <end position="1071"/>
    </location>
</feature>
<feature type="domain" description="F-BAR" evidence="6">
    <location>
        <begin position="22"/>
        <end position="325"/>
    </location>
</feature>
<feature type="domain" description="Rho-GAP" evidence="4">
    <location>
        <begin position="489"/>
        <end position="679"/>
    </location>
</feature>
<feature type="domain" description="SH3" evidence="5">
    <location>
        <begin position="728"/>
        <end position="787"/>
    </location>
</feature>
<feature type="region of interest" description="Disordered" evidence="7">
    <location>
        <begin position="181"/>
        <end position="211"/>
    </location>
</feature>
<feature type="region of interest" description="Disordered" evidence="7">
    <location>
        <begin position="703"/>
        <end position="726"/>
    </location>
</feature>
<feature type="region of interest" description="Disordered" evidence="7">
    <location>
        <begin position="794"/>
        <end position="820"/>
    </location>
</feature>
<feature type="region of interest" description="Disordered" evidence="7">
    <location>
        <begin position="835"/>
        <end position="936"/>
    </location>
</feature>
<feature type="region of interest" description="Disordered" evidence="7">
    <location>
        <begin position="983"/>
        <end position="1012"/>
    </location>
</feature>
<feature type="region of interest" description="Disordered" evidence="7">
    <location>
        <begin position="1029"/>
        <end position="1071"/>
    </location>
</feature>
<feature type="coiled-coil region" evidence="3">
    <location>
        <begin position="363"/>
        <end position="401"/>
    </location>
</feature>
<feature type="coiled-coil region" evidence="3">
    <location>
        <begin position="940"/>
        <end position="968"/>
    </location>
</feature>
<feature type="compositionally biased region" description="Basic and acidic residues" evidence="7">
    <location>
        <begin position="181"/>
        <end position="203"/>
    </location>
</feature>
<feature type="compositionally biased region" description="Polar residues" evidence="7">
    <location>
        <begin position="857"/>
        <end position="867"/>
    </location>
</feature>
<feature type="compositionally biased region" description="Polar residues" evidence="7">
    <location>
        <begin position="874"/>
        <end position="885"/>
    </location>
</feature>
<feature type="compositionally biased region" description="Polar residues" evidence="7">
    <location>
        <begin position="897"/>
        <end position="907"/>
    </location>
</feature>
<feature type="compositionally biased region" description="Polar residues" evidence="7">
    <location>
        <begin position="919"/>
        <end position="933"/>
    </location>
</feature>
<feature type="compositionally biased region" description="Polar residues" evidence="7">
    <location>
        <begin position="1047"/>
        <end position="1071"/>
    </location>
</feature>
<feature type="site" description="Arginine finger; crucial for GTP hydrolysis by stabilizing the transition state" evidence="4">
    <location>
        <position position="527"/>
    </location>
</feature>
<feature type="modified residue" description="Phosphoserine" evidence="12">
    <location>
        <position position="206"/>
    </location>
</feature>
<feature type="modified residue" description="Phosphoserine" evidence="12">
    <location>
        <position position="427"/>
    </location>
</feature>
<feature type="modified residue" description="Phosphoserine" evidence="2">
    <location>
        <position position="500"/>
    </location>
</feature>
<feature type="modified residue" description="Phosphoserine" evidence="12">
    <location>
        <position position="691"/>
    </location>
</feature>
<feature type="modified residue" description="Phosphoserine" evidence="2">
    <location>
        <position position="695"/>
    </location>
</feature>
<feature type="modified residue" description="Phosphoserine" evidence="1">
    <location>
        <position position="724"/>
    </location>
</feature>
<feature type="modified residue" description="Phosphoserine" evidence="1">
    <location>
        <position position="795"/>
    </location>
</feature>
<feature type="modified residue" description="Phosphoserine" evidence="1">
    <location>
        <position position="916"/>
    </location>
</feature>
<feature type="modified residue" description="Symmetric dimethylarginine; by PRMT5" evidence="1">
    <location>
        <position position="927"/>
    </location>
</feature>
<feature type="modified residue" description="Phosphoserine" evidence="1">
    <location>
        <position position="930"/>
    </location>
</feature>
<feature type="modified residue" description="Phosphoserine" evidence="2">
    <location>
        <position position="990"/>
    </location>
</feature>
<feature type="modified residue" description="Phosphoserine" evidence="1">
    <location>
        <position position="994"/>
    </location>
</feature>
<feature type="modified residue" description="Phosphoserine" evidence="1">
    <location>
        <position position="1013"/>
    </location>
</feature>
<feature type="modified residue" description="Phosphoserine" evidence="1">
    <location>
        <position position="1027"/>
    </location>
</feature>
<name>SRGP2_RAT</name>
<proteinExistence type="evidence at protein level"/>
<reference key="1">
    <citation type="journal article" date="2004" name="Nature">
        <title>Genome sequence of the Brown Norway rat yields insights into mammalian evolution.</title>
        <authorList>
            <person name="Gibbs R.A."/>
            <person name="Weinstock G.M."/>
            <person name="Metzker M.L."/>
            <person name="Muzny D.M."/>
            <person name="Sodergren E.J."/>
            <person name="Scherer S."/>
            <person name="Scott G."/>
            <person name="Steffen D."/>
            <person name="Worley K.C."/>
            <person name="Burch P.E."/>
            <person name="Okwuonu G."/>
            <person name="Hines S."/>
            <person name="Lewis L."/>
            <person name="Deramo C."/>
            <person name="Delgado O."/>
            <person name="Dugan-Rocha S."/>
            <person name="Miner G."/>
            <person name="Morgan M."/>
            <person name="Hawes A."/>
            <person name="Gill R."/>
            <person name="Holt R.A."/>
            <person name="Adams M.D."/>
            <person name="Amanatides P.G."/>
            <person name="Baden-Tillson H."/>
            <person name="Barnstead M."/>
            <person name="Chin S."/>
            <person name="Evans C.A."/>
            <person name="Ferriera S."/>
            <person name="Fosler C."/>
            <person name="Glodek A."/>
            <person name="Gu Z."/>
            <person name="Jennings D."/>
            <person name="Kraft C.L."/>
            <person name="Nguyen T."/>
            <person name="Pfannkoch C.M."/>
            <person name="Sitter C."/>
            <person name="Sutton G.G."/>
            <person name="Venter J.C."/>
            <person name="Woodage T."/>
            <person name="Smith D."/>
            <person name="Lee H.-M."/>
            <person name="Gustafson E."/>
            <person name="Cahill P."/>
            <person name="Kana A."/>
            <person name="Doucette-Stamm L."/>
            <person name="Weinstock K."/>
            <person name="Fechtel K."/>
            <person name="Weiss R.B."/>
            <person name="Dunn D.M."/>
            <person name="Green E.D."/>
            <person name="Blakesley R.W."/>
            <person name="Bouffard G.G."/>
            <person name="De Jong P.J."/>
            <person name="Osoegawa K."/>
            <person name="Zhu B."/>
            <person name="Marra M."/>
            <person name="Schein J."/>
            <person name="Bosdet I."/>
            <person name="Fjell C."/>
            <person name="Jones S."/>
            <person name="Krzywinski M."/>
            <person name="Mathewson C."/>
            <person name="Siddiqui A."/>
            <person name="Wye N."/>
            <person name="McPherson J."/>
            <person name="Zhao S."/>
            <person name="Fraser C.M."/>
            <person name="Shetty J."/>
            <person name="Shatsman S."/>
            <person name="Geer K."/>
            <person name="Chen Y."/>
            <person name="Abramzon S."/>
            <person name="Nierman W.C."/>
            <person name="Havlak P.H."/>
            <person name="Chen R."/>
            <person name="Durbin K.J."/>
            <person name="Egan A."/>
            <person name="Ren Y."/>
            <person name="Song X.-Z."/>
            <person name="Li B."/>
            <person name="Liu Y."/>
            <person name="Qin X."/>
            <person name="Cawley S."/>
            <person name="Cooney A.J."/>
            <person name="D'Souza L.M."/>
            <person name="Martin K."/>
            <person name="Wu J.Q."/>
            <person name="Gonzalez-Garay M.L."/>
            <person name="Jackson A.R."/>
            <person name="Kalafus K.J."/>
            <person name="McLeod M.P."/>
            <person name="Milosavljevic A."/>
            <person name="Virk D."/>
            <person name="Volkov A."/>
            <person name="Wheeler D.A."/>
            <person name="Zhang Z."/>
            <person name="Bailey J.A."/>
            <person name="Eichler E.E."/>
            <person name="Tuzun E."/>
            <person name="Birney E."/>
            <person name="Mongin E."/>
            <person name="Ureta-Vidal A."/>
            <person name="Woodwark C."/>
            <person name="Zdobnov E."/>
            <person name="Bork P."/>
            <person name="Suyama M."/>
            <person name="Torrents D."/>
            <person name="Alexandersson M."/>
            <person name="Trask B.J."/>
            <person name="Young J.M."/>
            <person name="Huang H."/>
            <person name="Wang H."/>
            <person name="Xing H."/>
            <person name="Daniels S."/>
            <person name="Gietzen D."/>
            <person name="Schmidt J."/>
            <person name="Stevens K."/>
            <person name="Vitt U."/>
            <person name="Wingrove J."/>
            <person name="Camara F."/>
            <person name="Mar Alba M."/>
            <person name="Abril J.F."/>
            <person name="Guigo R."/>
            <person name="Smit A."/>
            <person name="Dubchak I."/>
            <person name="Rubin E.M."/>
            <person name="Couronne O."/>
            <person name="Poliakov A."/>
            <person name="Huebner N."/>
            <person name="Ganten D."/>
            <person name="Goesele C."/>
            <person name="Hummel O."/>
            <person name="Kreitler T."/>
            <person name="Lee Y.-A."/>
            <person name="Monti J."/>
            <person name="Schulz H."/>
            <person name="Zimdahl H."/>
            <person name="Himmelbauer H."/>
            <person name="Lehrach H."/>
            <person name="Jacob H.J."/>
            <person name="Bromberg S."/>
            <person name="Gullings-Handley J."/>
            <person name="Jensen-Seaman M.I."/>
            <person name="Kwitek A.E."/>
            <person name="Lazar J."/>
            <person name="Pasko D."/>
            <person name="Tonellato P.J."/>
            <person name="Twigger S."/>
            <person name="Ponting C.P."/>
            <person name="Duarte J.M."/>
            <person name="Rice S."/>
            <person name="Goodstadt L."/>
            <person name="Beatson S.A."/>
            <person name="Emes R.D."/>
            <person name="Winter E.E."/>
            <person name="Webber C."/>
            <person name="Brandt P."/>
            <person name="Nyakatura G."/>
            <person name="Adetobi M."/>
            <person name="Chiaromonte F."/>
            <person name="Elnitski L."/>
            <person name="Eswara P."/>
            <person name="Hardison R.C."/>
            <person name="Hou M."/>
            <person name="Kolbe D."/>
            <person name="Makova K."/>
            <person name="Miller W."/>
            <person name="Nekrutenko A."/>
            <person name="Riemer C."/>
            <person name="Schwartz S."/>
            <person name="Taylor J."/>
            <person name="Yang S."/>
            <person name="Zhang Y."/>
            <person name="Lindpaintner K."/>
            <person name="Andrews T.D."/>
            <person name="Caccamo M."/>
            <person name="Clamp M."/>
            <person name="Clarke L."/>
            <person name="Curwen V."/>
            <person name="Durbin R.M."/>
            <person name="Eyras E."/>
            <person name="Searle S.M."/>
            <person name="Cooper G.M."/>
            <person name="Batzoglou S."/>
            <person name="Brudno M."/>
            <person name="Sidow A."/>
            <person name="Stone E.A."/>
            <person name="Payseur B.A."/>
            <person name="Bourque G."/>
            <person name="Lopez-Otin C."/>
            <person name="Puente X.S."/>
            <person name="Chakrabarti K."/>
            <person name="Chatterji S."/>
            <person name="Dewey C."/>
            <person name="Pachter L."/>
            <person name="Bray N."/>
            <person name="Yap V.B."/>
            <person name="Caspi A."/>
            <person name="Tesler G."/>
            <person name="Pevzner P.A."/>
            <person name="Haussler D."/>
            <person name="Roskin K.M."/>
            <person name="Baertsch R."/>
            <person name="Clawson H."/>
            <person name="Furey T.S."/>
            <person name="Hinrichs A.S."/>
            <person name="Karolchik D."/>
            <person name="Kent W.J."/>
            <person name="Rosenbloom K.R."/>
            <person name="Trumbower H."/>
            <person name="Weirauch M."/>
            <person name="Cooper D.N."/>
            <person name="Stenson P.D."/>
            <person name="Ma B."/>
            <person name="Brent M."/>
            <person name="Arumugam M."/>
            <person name="Shteynberg D."/>
            <person name="Copley R.R."/>
            <person name="Taylor M.S."/>
            <person name="Riethman H."/>
            <person name="Mudunuri U."/>
            <person name="Peterson J."/>
            <person name="Guyer M."/>
            <person name="Felsenfeld A."/>
            <person name="Old S."/>
            <person name="Mockrin S."/>
            <person name="Collins F.S."/>
        </authorList>
    </citation>
    <scope>NUCLEOTIDE SEQUENCE [LARGE SCALE GENOMIC DNA]</scope>
    <source>
        <strain>Brown Norway</strain>
    </source>
</reference>
<reference key="2">
    <citation type="journal article" date="2008" name="Cell. Mol. Neurobiol.">
        <title>Regulated shuttling of Slit-Robo-GTPase activating proteins between nucleus and cytoplasm during brain development.</title>
        <authorList>
            <person name="Yao Q."/>
            <person name="Jin W.L."/>
            <person name="Wang Y."/>
            <person name="Ju G."/>
        </authorList>
    </citation>
    <scope>SUBCELLULAR LOCATION</scope>
    <scope>DEVELOPMENTAL STAGE</scope>
</reference>
<reference key="3">
    <citation type="journal article" date="2012" name="Nat. Commun.">
        <title>Quantitative maps of protein phosphorylation sites across 14 different rat organs and tissues.</title>
        <authorList>
            <person name="Lundby A."/>
            <person name="Secher A."/>
            <person name="Lage K."/>
            <person name="Nordsborg N.B."/>
            <person name="Dmytriyev A."/>
            <person name="Lundby C."/>
            <person name="Olsen J.V."/>
        </authorList>
    </citation>
    <scope>PHOSPHORYLATION [LARGE SCALE ANALYSIS] AT SER-206; SER-427 AND SER-691</scope>
    <scope>IDENTIFICATION BY MASS SPECTROMETRY [LARGE SCALE ANALYSIS]</scope>
</reference>
<reference key="4">
    <citation type="journal article" date="2016" name="Mol. Med. Report.">
        <title>Dynamic expression of srGAP2 in cell nuclei and cytoplasm during the differentiation of rat neural stem cells in vitro.</title>
        <authorList>
            <person name="Jiao Q."/>
            <person name="Wang L."/>
            <person name="Zhang Z."/>
            <person name="Wang Y."/>
            <person name="Yan H."/>
            <person name="Ma W."/>
            <person name="Jin W."/>
            <person name="Lu H."/>
            <person name="Liu Y."/>
        </authorList>
    </citation>
    <scope>SUBCELLULAR LOCATION</scope>
</reference>
<comment type="function">
    <text evidence="2">Postsynaptic RAC1 GTPase activating protein (GAP) that plays a key role in neuronal morphogenesis and migration mainly during development of the cerebral cortex. Regulates excitatory and inhibitory synapse maturation and density in cortical pyramidal neurons. SRGAP2/SRGAP2A limits excitatory and inhibitory synapse density through its RAC1-specific GTPase activating activity, while it promotes maturation of both excitatory and inhibitory synapses through its ability to bind to the postsynaptic scaffolding protein HOMER1 at excitatory synapses, and the postsynaptic protein GPHN at inhibitory synapses. Mechanistically, acts by binding and deforming membranes, thereby regulating actin dynamics to regulate cell migration and differentiation. Promotes cell repulsion and contact inhibition of locomotion: localizes to protrusions with curved edges and controls the duration of RAC1 activity in contact protrusions. In non-neuronal cells, may also play a role in cell migration by regulating the formation of lamellipodia and filopodia.</text>
</comment>
<comment type="subunit">
    <text evidence="1 2">Homodimer. Forms a heterooligomer with SRGAP1 and SRGAP3 through its F-BAR domain. Interacts (via SH3 domain) with GPHN. Interacts (via SH3 domain) with FMNL1 (activated by RAC1); regulates the actin filament severing activity of FMNL1 and actin dynamics. Interacts (via SH3 domain) with FMNL3. Interacts with RAC1; specifically stimulates RAC1 GTPase activity. Interacts (via F-BAR domain) with HOMER1. Interacts with ROBO1 and ROBO2 (By similarity). Interacts with FASLG. Interacts with PRMT5 (By similarity).</text>
</comment>
<comment type="subcellular location">
    <subcellularLocation>
        <location evidence="1">Cell membrane</location>
    </subcellularLocation>
    <subcellularLocation>
        <location evidence="1">Cell projection</location>
        <location evidence="1">Dendritic spine</location>
    </subcellularLocation>
    <subcellularLocation>
        <location evidence="2">Postsynaptic density</location>
    </subcellularLocation>
    <subcellularLocation>
        <location evidence="2">Postsynaptic cell membrane</location>
    </subcellularLocation>
    <subcellularLocation>
        <location evidence="1">Cell projection</location>
        <location evidence="1">Lamellipodium</location>
    </subcellularLocation>
    <subcellularLocation>
        <location evidence="2">Cytoplasmic vesicle</location>
        <location evidence="2">Phagosome</location>
    </subcellularLocation>
    <subcellularLocation>
        <location evidence="8 9">Nucleus</location>
    </subcellularLocation>
    <subcellularLocation>
        <location evidence="8 9">Cytoplasm</location>
        <location evidence="8 9">Cytosol</location>
    </subcellularLocation>
    <text evidence="2 8">Recruited to actin-rich phagosomes during phagocytosis (By similarity). Translocates from nucleus to cytoplasm during development (PubMed:17710530).</text>
</comment>
<comment type="developmental stage">
    <text evidence="8">Expressed in brain during neonatal period. Not detected in adult brain (at protein level).</text>
</comment>
<comment type="domain">
    <text evidence="1">The F-BAR domain mediates oligomerization, binds membranes, and induces plasma membrane protrusions.</text>
</comment>
<comment type="PTM">
    <text evidence="1">Methylation at Arg-927 is required for the stimulation of cell migration, dimerization and localization at the plasma membrane protrusions.</text>
</comment>